<gene>
    <name type="ordered locus">MJ1345</name>
</gene>
<dbReference type="EMBL" id="L77117">
    <property type="protein sequence ID" value="AAB99354.1"/>
    <property type="molecule type" value="Genomic_DNA"/>
</dbReference>
<dbReference type="PIR" id="H64467">
    <property type="entry name" value="H64467"/>
</dbReference>
<dbReference type="SMR" id="Q58741"/>
<dbReference type="STRING" id="243232.MJ_1345"/>
<dbReference type="PaxDb" id="243232-MJ_1345"/>
<dbReference type="EnsemblBacteria" id="AAB99354">
    <property type="protein sequence ID" value="AAB99354"/>
    <property type="gene ID" value="MJ_1345"/>
</dbReference>
<dbReference type="KEGG" id="mja:MJ_1345"/>
<dbReference type="eggNOG" id="arCOG03038">
    <property type="taxonomic scope" value="Archaea"/>
</dbReference>
<dbReference type="HOGENOM" id="CLU_003728_2_0_2"/>
<dbReference type="InParanoid" id="Q58741"/>
<dbReference type="PhylomeDB" id="Q58741"/>
<dbReference type="Proteomes" id="UP000000805">
    <property type="component" value="Chromosome"/>
</dbReference>
<dbReference type="Gene3D" id="1.25.40.10">
    <property type="entry name" value="Tetratricopeptide repeat domain"/>
    <property type="match status" value="3"/>
</dbReference>
<dbReference type="InterPro" id="IPR011990">
    <property type="entry name" value="TPR-like_helical_dom_sf"/>
</dbReference>
<dbReference type="InterPro" id="IPR019734">
    <property type="entry name" value="TPR_rpt"/>
</dbReference>
<dbReference type="InterPro" id="IPR051685">
    <property type="entry name" value="Ycf3/AcsC/BcsC/TPR_MFPF"/>
</dbReference>
<dbReference type="PANTHER" id="PTHR44943">
    <property type="entry name" value="CELLULOSE SYNTHASE OPERON PROTEIN C"/>
    <property type="match status" value="1"/>
</dbReference>
<dbReference type="PANTHER" id="PTHR44943:SF8">
    <property type="entry name" value="TPR REPEAT-CONTAINING PROTEIN MJ0263"/>
    <property type="match status" value="1"/>
</dbReference>
<dbReference type="Pfam" id="PF12895">
    <property type="entry name" value="ANAPC3"/>
    <property type="match status" value="1"/>
</dbReference>
<dbReference type="Pfam" id="PF00515">
    <property type="entry name" value="TPR_1"/>
    <property type="match status" value="3"/>
</dbReference>
<dbReference type="Pfam" id="PF13174">
    <property type="entry name" value="TPR_6"/>
    <property type="match status" value="1"/>
</dbReference>
<dbReference type="Pfam" id="PF13181">
    <property type="entry name" value="TPR_8"/>
    <property type="match status" value="1"/>
</dbReference>
<dbReference type="SMART" id="SM00028">
    <property type="entry name" value="TPR"/>
    <property type="match status" value="8"/>
</dbReference>
<dbReference type="SUPFAM" id="SSF48452">
    <property type="entry name" value="TPR-like"/>
    <property type="match status" value="1"/>
</dbReference>
<dbReference type="PROSITE" id="PS50005">
    <property type="entry name" value="TPR"/>
    <property type="match status" value="8"/>
</dbReference>
<dbReference type="PROSITE" id="PS50293">
    <property type="entry name" value="TPR_REGION"/>
    <property type="match status" value="1"/>
</dbReference>
<accession>Q58741</accession>
<reference key="1">
    <citation type="journal article" date="1996" name="Science">
        <title>Complete genome sequence of the methanogenic archaeon, Methanococcus jannaschii.</title>
        <authorList>
            <person name="Bult C.J."/>
            <person name="White O."/>
            <person name="Olsen G.J."/>
            <person name="Zhou L."/>
            <person name="Fleischmann R.D."/>
            <person name="Sutton G.G."/>
            <person name="Blake J.A."/>
            <person name="FitzGerald L.M."/>
            <person name="Clayton R.A."/>
            <person name="Gocayne J.D."/>
            <person name="Kerlavage A.R."/>
            <person name="Dougherty B.A."/>
            <person name="Tomb J.-F."/>
            <person name="Adams M.D."/>
            <person name="Reich C.I."/>
            <person name="Overbeek R."/>
            <person name="Kirkness E.F."/>
            <person name="Weinstock K.G."/>
            <person name="Merrick J.M."/>
            <person name="Glodek A."/>
            <person name="Scott J.L."/>
            <person name="Geoghagen N.S.M."/>
            <person name="Weidman J.F."/>
            <person name="Fuhrmann J.L."/>
            <person name="Nguyen D."/>
            <person name="Utterback T.R."/>
            <person name="Kelley J.M."/>
            <person name="Peterson J.D."/>
            <person name="Sadow P.W."/>
            <person name="Hanna M.C."/>
            <person name="Cotton M.D."/>
            <person name="Roberts K.M."/>
            <person name="Hurst M.A."/>
            <person name="Kaine B.P."/>
            <person name="Borodovsky M."/>
            <person name="Klenk H.-P."/>
            <person name="Fraser C.M."/>
            <person name="Smith H.O."/>
            <person name="Woese C.R."/>
            <person name="Venter J.C."/>
        </authorList>
    </citation>
    <scope>NUCLEOTIDE SEQUENCE [LARGE SCALE GENOMIC DNA]</scope>
    <source>
        <strain>ATCC 43067 / DSM 2661 / JAL-1 / JCM 10045 / NBRC 100440</strain>
    </source>
</reference>
<reference key="2">
    <citation type="journal article" date="1998" name="Trends Biochem. Sci.">
        <title>Tetratrico-peptide-repeat proteins in the archaeon Methanococcus jannaschii.</title>
        <authorList>
            <person name="Kyrpides N.C."/>
            <person name="Woese C.R."/>
        </authorList>
    </citation>
    <scope>DISCUSSION OF SEQUENCE</scope>
</reference>
<proteinExistence type="predicted"/>
<name>Y1345_METJA</name>
<feature type="chain" id="PRO_0000106460" description="TPR repeat-containing protein MJ1345">
    <location>
        <begin position="1"/>
        <end position="314"/>
    </location>
</feature>
<feature type="repeat" description="TPR 1">
    <location>
        <begin position="12"/>
        <end position="45"/>
    </location>
</feature>
<feature type="repeat" description="TPR 2">
    <location>
        <begin position="46"/>
        <end position="78"/>
    </location>
</feature>
<feature type="repeat" description="TPR 3">
    <location>
        <begin position="80"/>
        <end position="112"/>
    </location>
</feature>
<feature type="repeat" description="TPR 4">
    <location>
        <begin position="114"/>
        <end position="146"/>
    </location>
</feature>
<feature type="repeat" description="TPR 5">
    <location>
        <begin position="147"/>
        <end position="180"/>
    </location>
</feature>
<feature type="repeat" description="TPR 6">
    <location>
        <begin position="182"/>
        <end position="214"/>
    </location>
</feature>
<feature type="repeat" description="TPR 7">
    <location>
        <begin position="215"/>
        <end position="248"/>
    </location>
</feature>
<feature type="repeat" description="TPR 8">
    <location>
        <begin position="249"/>
        <end position="282"/>
    </location>
</feature>
<feature type="repeat" description="TPR 9">
    <location>
        <begin position="284"/>
        <end position="313"/>
    </location>
</feature>
<sequence length="314" mass="36518">MGEGVNMEIYNESILWDEYFDALEKRNYEKALLLIDKILEVRESPDVYVRKARILRTLGENDKALEYFDKALKLKPKYILANFLKGALLVSLGKLEEAKEVFLKLCRLEKSDLPVKYVTAFILKKLGEYDYALKIIDKILKKYPKSAIAWAEKGEILYREGKLKKSLECFDNALKINPKDCQSLLYKGEILFKLGRYGEALKCLKKVFERNNKDIRALMYIIQILIYLGRLNQALEYTKKALKLNPDDPLLYLYKGIILNKLGKYNEAIKYFDKVLEINPNIPDAWNGKAIALEKLGKINEAIECYNRALDIYE</sequence>
<protein>
    <recommendedName>
        <fullName>TPR repeat-containing protein MJ1345</fullName>
    </recommendedName>
</protein>
<keyword id="KW-1185">Reference proteome</keyword>
<keyword id="KW-0677">Repeat</keyword>
<keyword id="KW-0802">TPR repeat</keyword>
<organism>
    <name type="scientific">Methanocaldococcus jannaschii (strain ATCC 43067 / DSM 2661 / JAL-1 / JCM 10045 / NBRC 100440)</name>
    <name type="common">Methanococcus jannaschii</name>
    <dbReference type="NCBI Taxonomy" id="243232"/>
    <lineage>
        <taxon>Archaea</taxon>
        <taxon>Methanobacteriati</taxon>
        <taxon>Methanobacteriota</taxon>
        <taxon>Methanomada group</taxon>
        <taxon>Methanococci</taxon>
        <taxon>Methanococcales</taxon>
        <taxon>Methanocaldococcaceae</taxon>
        <taxon>Methanocaldococcus</taxon>
    </lineage>
</organism>